<name>CCME_NEOSM</name>
<comment type="function">
    <text evidence="1">Heme chaperone required for the biogenesis of c-type cytochromes. Transiently binds heme delivered by CcmC and transfers the heme to apo-cytochromes in a process facilitated by CcmF and CcmH.</text>
</comment>
<comment type="subcellular location">
    <subcellularLocation>
        <location evidence="1">Cell inner membrane</location>
        <topology evidence="1">Single-pass type II membrane protein</topology>
        <orientation evidence="1">Periplasmic side</orientation>
    </subcellularLocation>
</comment>
<comment type="similarity">
    <text evidence="1">Belongs to the CcmE/CycJ family.</text>
</comment>
<gene>
    <name evidence="1" type="primary">ccmE</name>
    <name evidence="1" type="synonym">cycJ</name>
    <name type="ordered locus">NSE_0828</name>
</gene>
<dbReference type="EMBL" id="CP000237">
    <property type="protein sequence ID" value="ABD46381.1"/>
    <property type="molecule type" value="Genomic_DNA"/>
</dbReference>
<dbReference type="RefSeq" id="WP_011452204.1">
    <property type="nucleotide sequence ID" value="NC_007798.1"/>
</dbReference>
<dbReference type="SMR" id="Q2GCU8"/>
<dbReference type="STRING" id="222891.NSE_0828"/>
<dbReference type="KEGG" id="nse:NSE_0828"/>
<dbReference type="eggNOG" id="COG2332">
    <property type="taxonomic scope" value="Bacteria"/>
</dbReference>
<dbReference type="HOGENOM" id="CLU_079503_1_1_5"/>
<dbReference type="OrthoDB" id="9793584at2"/>
<dbReference type="Proteomes" id="UP000001942">
    <property type="component" value="Chromosome"/>
</dbReference>
<dbReference type="GO" id="GO:0005886">
    <property type="term" value="C:plasma membrane"/>
    <property type="evidence" value="ECO:0007669"/>
    <property type="project" value="UniProtKB-SubCell"/>
</dbReference>
<dbReference type="GO" id="GO:0020037">
    <property type="term" value="F:heme binding"/>
    <property type="evidence" value="ECO:0007669"/>
    <property type="project" value="InterPro"/>
</dbReference>
<dbReference type="GO" id="GO:0046872">
    <property type="term" value="F:metal ion binding"/>
    <property type="evidence" value="ECO:0007669"/>
    <property type="project" value="UniProtKB-KW"/>
</dbReference>
<dbReference type="GO" id="GO:0017004">
    <property type="term" value="P:cytochrome complex assembly"/>
    <property type="evidence" value="ECO:0007669"/>
    <property type="project" value="UniProtKB-KW"/>
</dbReference>
<dbReference type="Gene3D" id="2.40.50.140">
    <property type="entry name" value="Nucleic acid-binding proteins"/>
    <property type="match status" value="1"/>
</dbReference>
<dbReference type="HAMAP" id="MF_01959">
    <property type="entry name" value="CcmE"/>
    <property type="match status" value="1"/>
</dbReference>
<dbReference type="InterPro" id="IPR004329">
    <property type="entry name" value="CcmE"/>
</dbReference>
<dbReference type="InterPro" id="IPR036127">
    <property type="entry name" value="CcmE-like_sf"/>
</dbReference>
<dbReference type="InterPro" id="IPR012340">
    <property type="entry name" value="NA-bd_OB-fold"/>
</dbReference>
<dbReference type="PANTHER" id="PTHR34128">
    <property type="entry name" value="CYTOCHROME C-TYPE BIOGENESIS PROTEIN CCME HOMOLOG, MITOCHONDRIAL"/>
    <property type="match status" value="1"/>
</dbReference>
<dbReference type="PANTHER" id="PTHR34128:SF2">
    <property type="entry name" value="CYTOCHROME C-TYPE BIOGENESIS PROTEIN CCME HOMOLOG, MITOCHONDRIAL"/>
    <property type="match status" value="1"/>
</dbReference>
<dbReference type="Pfam" id="PF03100">
    <property type="entry name" value="CcmE"/>
    <property type="match status" value="1"/>
</dbReference>
<dbReference type="SUPFAM" id="SSF82093">
    <property type="entry name" value="Heme chaperone CcmE"/>
    <property type="match status" value="1"/>
</dbReference>
<proteinExistence type="inferred from homology"/>
<accession>Q2GCU8</accession>
<organism>
    <name type="scientific">Neorickettsia sennetsu (strain ATCC VR-367 / Miyayama)</name>
    <name type="common">Ehrlichia sennetsu</name>
    <dbReference type="NCBI Taxonomy" id="222891"/>
    <lineage>
        <taxon>Bacteria</taxon>
        <taxon>Pseudomonadati</taxon>
        <taxon>Pseudomonadota</taxon>
        <taxon>Alphaproteobacteria</taxon>
        <taxon>Rickettsiales</taxon>
        <taxon>Anaplasmataceae</taxon>
        <taxon>Neorickettsia</taxon>
    </lineage>
</organism>
<feature type="chain" id="PRO_0000238823" description="Cytochrome c-type biogenesis protein CcmE">
    <location>
        <begin position="1"/>
        <end position="135"/>
    </location>
</feature>
<feature type="topological domain" description="Cytoplasmic" evidence="1">
    <location>
        <begin position="1"/>
        <end position="8"/>
    </location>
</feature>
<feature type="transmembrane region" description="Helical; Signal-anchor for type II membrane protein" evidence="1">
    <location>
        <begin position="9"/>
        <end position="29"/>
    </location>
</feature>
<feature type="topological domain" description="Periplasmic" evidence="1">
    <location>
        <begin position="30"/>
        <end position="135"/>
    </location>
</feature>
<feature type="binding site" description="covalent" evidence="1">
    <location>
        <position position="118"/>
    </location>
    <ligand>
        <name>heme</name>
        <dbReference type="ChEBI" id="CHEBI:30413"/>
    </ligand>
</feature>
<feature type="binding site" description="axial binding residue" evidence="1">
    <location>
        <position position="122"/>
    </location>
    <ligand>
        <name>heme</name>
        <dbReference type="ChEBI" id="CHEBI:30413"/>
    </ligand>
    <ligandPart>
        <name>Fe</name>
        <dbReference type="ChEBI" id="CHEBI:18248"/>
    </ligandPart>
</feature>
<sequence>MLLLRWKRFWFLSLGILLFSGVVSLMLFNLSESISFFYLPSDVARVVASNREIKVGGIIKAIKKSKDGVRFLLSDGAAEIEVLYEGILPSLVQDGINVVVVARFEGGLLLAKRVLVKHDERYYPPEDFIKSVRGE</sequence>
<keyword id="KW-0997">Cell inner membrane</keyword>
<keyword id="KW-1003">Cell membrane</keyword>
<keyword id="KW-0201">Cytochrome c-type biogenesis</keyword>
<keyword id="KW-0349">Heme</keyword>
<keyword id="KW-0408">Iron</keyword>
<keyword id="KW-0472">Membrane</keyword>
<keyword id="KW-0479">Metal-binding</keyword>
<keyword id="KW-0735">Signal-anchor</keyword>
<keyword id="KW-0812">Transmembrane</keyword>
<keyword id="KW-1133">Transmembrane helix</keyword>
<evidence type="ECO:0000255" key="1">
    <source>
        <dbReference type="HAMAP-Rule" id="MF_01959"/>
    </source>
</evidence>
<reference key="1">
    <citation type="journal article" date="2006" name="PLoS Genet.">
        <title>Comparative genomics of emerging human ehrlichiosis agents.</title>
        <authorList>
            <person name="Dunning Hotopp J.C."/>
            <person name="Lin M."/>
            <person name="Madupu R."/>
            <person name="Crabtree J."/>
            <person name="Angiuoli S.V."/>
            <person name="Eisen J.A."/>
            <person name="Seshadri R."/>
            <person name="Ren Q."/>
            <person name="Wu M."/>
            <person name="Utterback T.R."/>
            <person name="Smith S."/>
            <person name="Lewis M."/>
            <person name="Khouri H."/>
            <person name="Zhang C."/>
            <person name="Niu H."/>
            <person name="Lin Q."/>
            <person name="Ohashi N."/>
            <person name="Zhi N."/>
            <person name="Nelson W.C."/>
            <person name="Brinkac L.M."/>
            <person name="Dodson R.J."/>
            <person name="Rosovitz M.J."/>
            <person name="Sundaram J.P."/>
            <person name="Daugherty S.C."/>
            <person name="Davidsen T."/>
            <person name="Durkin A.S."/>
            <person name="Gwinn M.L."/>
            <person name="Haft D.H."/>
            <person name="Selengut J.D."/>
            <person name="Sullivan S.A."/>
            <person name="Zafar N."/>
            <person name="Zhou L."/>
            <person name="Benahmed F."/>
            <person name="Forberger H."/>
            <person name="Halpin R."/>
            <person name="Mulligan S."/>
            <person name="Robinson J."/>
            <person name="White O."/>
            <person name="Rikihisa Y."/>
            <person name="Tettelin H."/>
        </authorList>
    </citation>
    <scope>NUCLEOTIDE SEQUENCE [LARGE SCALE GENOMIC DNA]</scope>
    <source>
        <strain>ATCC VR-367 / Miyayama</strain>
    </source>
</reference>
<protein>
    <recommendedName>
        <fullName evidence="1">Cytochrome c-type biogenesis protein CcmE</fullName>
    </recommendedName>
    <alternativeName>
        <fullName evidence="1">Cytochrome c maturation protein E</fullName>
    </alternativeName>
    <alternativeName>
        <fullName evidence="1">Heme chaperone CcmE</fullName>
    </alternativeName>
</protein>